<name>NELFB_MOUSE</name>
<dbReference type="EMBL" id="AL732309">
    <property type="status" value="NOT_ANNOTATED_CDS"/>
    <property type="molecule type" value="Genomic_DNA"/>
</dbReference>
<dbReference type="EMBL" id="BC004762">
    <property type="protein sequence ID" value="AAH04762.1"/>
    <property type="status" value="ALT_INIT"/>
    <property type="molecule type" value="mRNA"/>
</dbReference>
<dbReference type="EMBL" id="AK080419">
    <property type="status" value="NOT_ANNOTATED_CDS"/>
    <property type="molecule type" value="mRNA"/>
</dbReference>
<dbReference type="EMBL" id="AB041607">
    <property type="protein sequence ID" value="BAA95090.1"/>
    <property type="status" value="ALT_INIT"/>
    <property type="molecule type" value="mRNA"/>
</dbReference>
<dbReference type="EMBL" id="AK173124">
    <property type="protein sequence ID" value="BAD32402.1"/>
    <property type="molecule type" value="mRNA"/>
</dbReference>
<dbReference type="RefSeq" id="NP_001297086.1">
    <property type="nucleotide sequence ID" value="NM_001310157.1"/>
</dbReference>
<dbReference type="RefSeq" id="NP_067368.3">
    <property type="nucleotide sequence ID" value="NM_021393.3"/>
</dbReference>
<dbReference type="SMR" id="Q8C4Y3"/>
<dbReference type="BioGRID" id="208386">
    <property type="interactions" value="3"/>
</dbReference>
<dbReference type="FunCoup" id="Q8C4Y3">
    <property type="interactions" value="3930"/>
</dbReference>
<dbReference type="STRING" id="10090.ENSMUSP00000057731"/>
<dbReference type="GlyGen" id="Q8C4Y3">
    <property type="glycosylation" value="1 site"/>
</dbReference>
<dbReference type="iPTMnet" id="Q8C4Y3"/>
<dbReference type="PhosphoSitePlus" id="Q8C4Y3"/>
<dbReference type="jPOST" id="Q8C4Y3"/>
<dbReference type="PaxDb" id="10090-ENSMUSP00000057731"/>
<dbReference type="PeptideAtlas" id="Q8C4Y3"/>
<dbReference type="ProteomicsDB" id="287369">
    <molecule id="Q8C4Y3-1"/>
</dbReference>
<dbReference type="ProteomicsDB" id="355156"/>
<dbReference type="Pumba" id="Q8C4Y3"/>
<dbReference type="DNASU" id="58202"/>
<dbReference type="Ensembl" id="ENSMUST00000059849.15">
    <molecule id="Q8C4Y3-3"/>
    <property type="protein sequence ID" value="ENSMUSP00000057731.10"/>
    <property type="gene ID" value="ENSMUSG00000013465.20"/>
</dbReference>
<dbReference type="GeneID" id="58202"/>
<dbReference type="KEGG" id="mmu:58202"/>
<dbReference type="UCSC" id="uc008iqm.2">
    <molecule id="Q8C4Y3-1"/>
    <property type="organism name" value="mouse"/>
</dbReference>
<dbReference type="AGR" id="MGI:1931035"/>
<dbReference type="CTD" id="25920"/>
<dbReference type="MGI" id="MGI:1931035">
    <property type="gene designation" value="Nelfb"/>
</dbReference>
<dbReference type="eggNOG" id="ENOG502QTMJ">
    <property type="taxonomic scope" value="Eukaryota"/>
</dbReference>
<dbReference type="GeneTree" id="ENSGT00390000012665"/>
<dbReference type="HOGENOM" id="CLU_037919_0_0_1"/>
<dbReference type="InParanoid" id="Q8C4Y3"/>
<dbReference type="OMA" id="LLWYIHP"/>
<dbReference type="OrthoDB" id="55964at9989"/>
<dbReference type="PhylomeDB" id="Q8C4Y3"/>
<dbReference type="TreeFam" id="TF324620"/>
<dbReference type="Reactome" id="R-MMU-112382">
    <property type="pathway name" value="Formation of RNA Pol II elongation complex"/>
</dbReference>
<dbReference type="Reactome" id="R-MMU-113418">
    <property type="pathway name" value="Formation of the Early Elongation Complex"/>
</dbReference>
<dbReference type="Reactome" id="R-MMU-674695">
    <property type="pathway name" value="RNA Polymerase II Pre-transcription Events"/>
</dbReference>
<dbReference type="Reactome" id="R-MMU-6796648">
    <property type="pathway name" value="TP53 Regulates Transcription of DNA Repair Genes"/>
</dbReference>
<dbReference type="Reactome" id="R-MMU-75955">
    <property type="pathway name" value="RNA Polymerase II Transcription Elongation"/>
</dbReference>
<dbReference type="BioGRID-ORCS" id="58202">
    <property type="hits" value="31 hits in 77 CRISPR screens"/>
</dbReference>
<dbReference type="ChiTaRS" id="Nelfb">
    <property type="organism name" value="mouse"/>
</dbReference>
<dbReference type="PRO" id="PR:Q8C4Y3"/>
<dbReference type="Proteomes" id="UP000000589">
    <property type="component" value="Chromosome 2"/>
</dbReference>
<dbReference type="RNAct" id="Q8C4Y3">
    <property type="molecule type" value="protein"/>
</dbReference>
<dbReference type="Bgee" id="ENSMUSG00000013465">
    <property type="expression patterns" value="Expressed in ear vesicle and 244 other cell types or tissues"/>
</dbReference>
<dbReference type="GO" id="GO:0005829">
    <property type="term" value="C:cytosol"/>
    <property type="evidence" value="ECO:0000304"/>
    <property type="project" value="Reactome"/>
</dbReference>
<dbReference type="GO" id="GO:0005741">
    <property type="term" value="C:mitochondrial outer membrane"/>
    <property type="evidence" value="ECO:0000304"/>
    <property type="project" value="Reactome"/>
</dbReference>
<dbReference type="GO" id="GO:0032021">
    <property type="term" value="C:NELF complex"/>
    <property type="evidence" value="ECO:0000250"/>
    <property type="project" value="UniProtKB"/>
</dbReference>
<dbReference type="GO" id="GO:0003723">
    <property type="term" value="F:RNA binding"/>
    <property type="evidence" value="ECO:0007669"/>
    <property type="project" value="UniProtKB-KW"/>
</dbReference>
<dbReference type="GO" id="GO:0008283">
    <property type="term" value="P:cell population proliferation"/>
    <property type="evidence" value="ECO:0000315"/>
    <property type="project" value="UniProtKB"/>
</dbReference>
<dbReference type="GO" id="GO:2000737">
    <property type="term" value="P:negative regulation of stem cell differentiation"/>
    <property type="evidence" value="ECO:0000315"/>
    <property type="project" value="UniProtKB"/>
</dbReference>
<dbReference type="GO" id="GO:0034244">
    <property type="term" value="P:negative regulation of transcription elongation by RNA polymerase II"/>
    <property type="evidence" value="ECO:0000315"/>
    <property type="project" value="UniProtKB"/>
</dbReference>
<dbReference type="GO" id="GO:0048863">
    <property type="term" value="P:stem cell differentiation"/>
    <property type="evidence" value="ECO:0000315"/>
    <property type="project" value="UniProtKB"/>
</dbReference>
<dbReference type="InterPro" id="IPR010405">
    <property type="entry name" value="COBRA1"/>
</dbReference>
<dbReference type="PANTHER" id="PTHR13503:SF3">
    <property type="entry name" value="NEGATIVE ELONGATION FACTOR B"/>
    <property type="match status" value="1"/>
</dbReference>
<dbReference type="PANTHER" id="PTHR13503">
    <property type="entry name" value="NEGATIVE ELONGATION FACTOR COMPLEX MEMBER B"/>
    <property type="match status" value="1"/>
</dbReference>
<dbReference type="Pfam" id="PF06209">
    <property type="entry name" value="COBRA1"/>
    <property type="match status" value="1"/>
</dbReference>
<gene>
    <name type="primary">Nelfb</name>
    <name evidence="7" type="synonym">Cobra1</name>
    <name type="ORF">MNCb-5210</name>
</gene>
<protein>
    <recommendedName>
        <fullName>Negative elongation factor B</fullName>
        <shortName>NELF-B</shortName>
    </recommendedName>
    <alternativeName>
        <fullName evidence="7">Cofactor of BRCA1</fullName>
    </alternativeName>
</protein>
<reference key="1">
    <citation type="journal article" date="2009" name="PLoS Biol.">
        <title>Lineage-specific biology revealed by a finished genome assembly of the mouse.</title>
        <authorList>
            <person name="Church D.M."/>
            <person name="Goodstadt L."/>
            <person name="Hillier L.W."/>
            <person name="Zody M.C."/>
            <person name="Goldstein S."/>
            <person name="She X."/>
            <person name="Bult C.J."/>
            <person name="Agarwala R."/>
            <person name="Cherry J.L."/>
            <person name="DiCuccio M."/>
            <person name="Hlavina W."/>
            <person name="Kapustin Y."/>
            <person name="Meric P."/>
            <person name="Maglott D."/>
            <person name="Birtle Z."/>
            <person name="Marques A.C."/>
            <person name="Graves T."/>
            <person name="Zhou S."/>
            <person name="Teague B."/>
            <person name="Potamousis K."/>
            <person name="Churas C."/>
            <person name="Place M."/>
            <person name="Herschleb J."/>
            <person name="Runnheim R."/>
            <person name="Forrest D."/>
            <person name="Amos-Landgraf J."/>
            <person name="Schwartz D.C."/>
            <person name="Cheng Z."/>
            <person name="Lindblad-Toh K."/>
            <person name="Eichler E.E."/>
            <person name="Ponting C.P."/>
        </authorList>
    </citation>
    <scope>NUCLEOTIDE SEQUENCE [LARGE SCALE GENOMIC DNA]</scope>
    <source>
        <strain>C57BL/6J</strain>
    </source>
</reference>
<reference key="2">
    <citation type="journal article" date="2004" name="Genome Res.">
        <title>The status, quality, and expansion of the NIH full-length cDNA project: the Mammalian Gene Collection (MGC).</title>
        <authorList>
            <consortium name="The MGC Project Team"/>
        </authorList>
    </citation>
    <scope>NUCLEOTIDE SEQUENCE [LARGE SCALE MRNA] (ISOFORM 2)</scope>
    <source>
        <tissue>Mammary tumor</tissue>
    </source>
</reference>
<reference key="3">
    <citation type="journal article" date="2005" name="Science">
        <title>The transcriptional landscape of the mammalian genome.</title>
        <authorList>
            <person name="Carninci P."/>
            <person name="Kasukawa T."/>
            <person name="Katayama S."/>
            <person name="Gough J."/>
            <person name="Frith M.C."/>
            <person name="Maeda N."/>
            <person name="Oyama R."/>
            <person name="Ravasi T."/>
            <person name="Lenhard B."/>
            <person name="Wells C."/>
            <person name="Kodzius R."/>
            <person name="Shimokawa K."/>
            <person name="Bajic V.B."/>
            <person name="Brenner S.E."/>
            <person name="Batalov S."/>
            <person name="Forrest A.R."/>
            <person name="Zavolan M."/>
            <person name="Davis M.J."/>
            <person name="Wilming L.G."/>
            <person name="Aidinis V."/>
            <person name="Allen J.E."/>
            <person name="Ambesi-Impiombato A."/>
            <person name="Apweiler R."/>
            <person name="Aturaliya R.N."/>
            <person name="Bailey T.L."/>
            <person name="Bansal M."/>
            <person name="Baxter L."/>
            <person name="Beisel K.W."/>
            <person name="Bersano T."/>
            <person name="Bono H."/>
            <person name="Chalk A.M."/>
            <person name="Chiu K.P."/>
            <person name="Choudhary V."/>
            <person name="Christoffels A."/>
            <person name="Clutterbuck D.R."/>
            <person name="Crowe M.L."/>
            <person name="Dalla E."/>
            <person name="Dalrymple B.P."/>
            <person name="de Bono B."/>
            <person name="Della Gatta G."/>
            <person name="di Bernardo D."/>
            <person name="Down T."/>
            <person name="Engstrom P."/>
            <person name="Fagiolini M."/>
            <person name="Faulkner G."/>
            <person name="Fletcher C.F."/>
            <person name="Fukushima T."/>
            <person name="Furuno M."/>
            <person name="Futaki S."/>
            <person name="Gariboldi M."/>
            <person name="Georgii-Hemming P."/>
            <person name="Gingeras T.R."/>
            <person name="Gojobori T."/>
            <person name="Green R.E."/>
            <person name="Gustincich S."/>
            <person name="Harbers M."/>
            <person name="Hayashi Y."/>
            <person name="Hensch T.K."/>
            <person name="Hirokawa N."/>
            <person name="Hill D."/>
            <person name="Huminiecki L."/>
            <person name="Iacono M."/>
            <person name="Ikeo K."/>
            <person name="Iwama A."/>
            <person name="Ishikawa T."/>
            <person name="Jakt M."/>
            <person name="Kanapin A."/>
            <person name="Katoh M."/>
            <person name="Kawasawa Y."/>
            <person name="Kelso J."/>
            <person name="Kitamura H."/>
            <person name="Kitano H."/>
            <person name="Kollias G."/>
            <person name="Krishnan S.P."/>
            <person name="Kruger A."/>
            <person name="Kummerfeld S.K."/>
            <person name="Kurochkin I.V."/>
            <person name="Lareau L.F."/>
            <person name="Lazarevic D."/>
            <person name="Lipovich L."/>
            <person name="Liu J."/>
            <person name="Liuni S."/>
            <person name="McWilliam S."/>
            <person name="Madan Babu M."/>
            <person name="Madera M."/>
            <person name="Marchionni L."/>
            <person name="Matsuda H."/>
            <person name="Matsuzawa S."/>
            <person name="Miki H."/>
            <person name="Mignone F."/>
            <person name="Miyake S."/>
            <person name="Morris K."/>
            <person name="Mottagui-Tabar S."/>
            <person name="Mulder N."/>
            <person name="Nakano N."/>
            <person name="Nakauchi H."/>
            <person name="Ng P."/>
            <person name="Nilsson R."/>
            <person name="Nishiguchi S."/>
            <person name="Nishikawa S."/>
            <person name="Nori F."/>
            <person name="Ohara O."/>
            <person name="Okazaki Y."/>
            <person name="Orlando V."/>
            <person name="Pang K.C."/>
            <person name="Pavan W.J."/>
            <person name="Pavesi G."/>
            <person name="Pesole G."/>
            <person name="Petrovsky N."/>
            <person name="Piazza S."/>
            <person name="Reed J."/>
            <person name="Reid J.F."/>
            <person name="Ring B.Z."/>
            <person name="Ringwald M."/>
            <person name="Rost B."/>
            <person name="Ruan Y."/>
            <person name="Salzberg S.L."/>
            <person name="Sandelin A."/>
            <person name="Schneider C."/>
            <person name="Schoenbach C."/>
            <person name="Sekiguchi K."/>
            <person name="Semple C.A."/>
            <person name="Seno S."/>
            <person name="Sessa L."/>
            <person name="Sheng Y."/>
            <person name="Shibata Y."/>
            <person name="Shimada H."/>
            <person name="Shimada K."/>
            <person name="Silva D."/>
            <person name="Sinclair B."/>
            <person name="Sperling S."/>
            <person name="Stupka E."/>
            <person name="Sugiura K."/>
            <person name="Sultana R."/>
            <person name="Takenaka Y."/>
            <person name="Taki K."/>
            <person name="Tammoja K."/>
            <person name="Tan S.L."/>
            <person name="Tang S."/>
            <person name="Taylor M.S."/>
            <person name="Tegner J."/>
            <person name="Teichmann S.A."/>
            <person name="Ueda H.R."/>
            <person name="van Nimwegen E."/>
            <person name="Verardo R."/>
            <person name="Wei C.L."/>
            <person name="Yagi K."/>
            <person name="Yamanishi H."/>
            <person name="Zabarovsky E."/>
            <person name="Zhu S."/>
            <person name="Zimmer A."/>
            <person name="Hide W."/>
            <person name="Bult C."/>
            <person name="Grimmond S.M."/>
            <person name="Teasdale R.D."/>
            <person name="Liu E.T."/>
            <person name="Brusic V."/>
            <person name="Quackenbush J."/>
            <person name="Wahlestedt C."/>
            <person name="Mattick J.S."/>
            <person name="Hume D.A."/>
            <person name="Kai C."/>
            <person name="Sasaki D."/>
            <person name="Tomaru Y."/>
            <person name="Fukuda S."/>
            <person name="Kanamori-Katayama M."/>
            <person name="Suzuki M."/>
            <person name="Aoki J."/>
            <person name="Arakawa T."/>
            <person name="Iida J."/>
            <person name="Imamura K."/>
            <person name="Itoh M."/>
            <person name="Kato T."/>
            <person name="Kawaji H."/>
            <person name="Kawagashira N."/>
            <person name="Kawashima T."/>
            <person name="Kojima M."/>
            <person name="Kondo S."/>
            <person name="Konno H."/>
            <person name="Nakano K."/>
            <person name="Ninomiya N."/>
            <person name="Nishio T."/>
            <person name="Okada M."/>
            <person name="Plessy C."/>
            <person name="Shibata K."/>
            <person name="Shiraki T."/>
            <person name="Suzuki S."/>
            <person name="Tagami M."/>
            <person name="Waki K."/>
            <person name="Watahiki A."/>
            <person name="Okamura-Oho Y."/>
            <person name="Suzuki H."/>
            <person name="Kawai J."/>
            <person name="Hayashizaki Y."/>
        </authorList>
    </citation>
    <scope>NUCLEOTIDE SEQUENCE [LARGE SCALE MRNA] OF 6-580 (ISOFORMS 1/2)</scope>
    <source>
        <strain>C57BL/6J</strain>
        <tissue>Cerebellum</tissue>
    </source>
</reference>
<reference key="4">
    <citation type="submission" date="2000-04" db="EMBL/GenBank/DDBJ databases">
        <title>Isolation of full-length cDNA clones from mouse brain cDNA library made by oligo-capping method.</title>
        <authorList>
            <person name="Osada N."/>
            <person name="Kusuda J."/>
            <person name="Tanuma R."/>
            <person name="Ito A."/>
            <person name="Hirata M."/>
            <person name="Sugano S."/>
            <person name="Hashimoto K."/>
        </authorList>
    </citation>
    <scope>NUCLEOTIDE SEQUENCE [LARGE SCALE MRNA] OF 34-580 (ISOFORMS 1/2)</scope>
    <source>
        <strain>C57BL/6J</strain>
        <tissue>Brain</tissue>
    </source>
</reference>
<reference key="5">
    <citation type="journal article" date="2004" name="DNA Res.">
        <title>Prediction of the coding sequences of mouse homologues of KIAA gene: IV. The complete nucleotide sequences of 500 mouse KIAA-homologous cDNAs identified by screening of terminal sequences of cDNA clones randomly sampled from size-fractionated libraries.</title>
        <authorList>
            <person name="Okazaki N."/>
            <person name="Kikuno R."/>
            <person name="Ohara R."/>
            <person name="Inamoto S."/>
            <person name="Koseki H."/>
            <person name="Hiraoka S."/>
            <person name="Saga Y."/>
            <person name="Seino S."/>
            <person name="Nishimura M."/>
            <person name="Kaisho T."/>
            <person name="Hoshino K."/>
            <person name="Kitamura H."/>
            <person name="Nagase T."/>
            <person name="Ohara O."/>
            <person name="Koga H."/>
        </authorList>
    </citation>
    <scope>NUCLEOTIDE SEQUENCE [LARGE SCALE MRNA] OF 61-580 (ISOFORMS 1/2)</scope>
    <source>
        <tissue>Embryonic tail</tissue>
    </source>
</reference>
<reference key="6">
    <citation type="journal article" date="2004" name="Mol. Cell. Proteomics">
        <title>Phosphoproteomic analysis of the developing mouse brain.</title>
        <authorList>
            <person name="Ballif B.A."/>
            <person name="Villen J."/>
            <person name="Beausoleil S.A."/>
            <person name="Schwartz D."/>
            <person name="Gygi S.P."/>
        </authorList>
    </citation>
    <scope>IDENTIFICATION BY MASS SPECTROMETRY [LARGE SCALE ANALYSIS]</scope>
    <source>
        <tissue>Embryonic brain</tissue>
    </source>
</reference>
<reference key="7">
    <citation type="journal article" date="2009" name="PLoS ONE">
        <title>Mouse cofactor of BRCA1 (Cobra1) is required for early embryogenesis.</title>
        <authorList>
            <person name="Amleh A."/>
            <person name="Nair S.J."/>
            <person name="Sun J."/>
            <person name="Sutherland A."/>
            <person name="Hasty P."/>
            <person name="Li R."/>
        </authorList>
    </citation>
    <scope>FUNCTION</scope>
    <scope>DISRUPTION PHENOTYPE</scope>
</reference>
<reference key="8">
    <citation type="journal article" date="2010" name="Cell">
        <title>A tissue-specific atlas of mouse protein phosphorylation and expression.</title>
        <authorList>
            <person name="Huttlin E.L."/>
            <person name="Jedrychowski M.P."/>
            <person name="Elias J.E."/>
            <person name="Goswami T."/>
            <person name="Rad R."/>
            <person name="Beausoleil S.A."/>
            <person name="Villen J."/>
            <person name="Haas W."/>
            <person name="Sowa M.E."/>
            <person name="Gygi S.P."/>
        </authorList>
    </citation>
    <scope>IDENTIFICATION BY MASS SPECTROMETRY [LARGE SCALE ANALYSIS]</scope>
    <source>
        <tissue>Kidney</tissue>
        <tissue>Liver</tissue>
        <tissue>Spleen</tissue>
        <tissue>Testis</tissue>
    </source>
</reference>
<reference key="9">
    <citation type="journal article" date="2014" name="Cell Rep.">
        <title>Negative elongation factor controls energy homeostasis in cardiomyocytes.</title>
        <authorList>
            <person name="Pan H."/>
            <person name="Qin K."/>
            <person name="Guo Z."/>
            <person name="Ma Y."/>
            <person name="April C."/>
            <person name="Gao X."/>
            <person name="Andrews T.G."/>
            <person name="Bokov A."/>
            <person name="Zhang J."/>
            <person name="Chen Y."/>
            <person name="Weintraub S.T."/>
            <person name="Fan J.B."/>
            <person name="Wang D."/>
            <person name="Hu Y."/>
            <person name="Aune G.J."/>
            <person name="Lindsey M.L."/>
            <person name="Li R."/>
        </authorList>
    </citation>
    <scope>FUNCTION</scope>
    <scope>DISRUPTION PHENOTYPE</scope>
</reference>
<reference key="10">
    <citation type="journal article" date="2015" name="Mol. Cell">
        <title>Pausing of RNA polymerase II regulates mammalian developmental potential through control of signaling networks.</title>
        <authorList>
            <person name="Williams L.H."/>
            <person name="Fromm G."/>
            <person name="Gokey N.G."/>
            <person name="Henriques T."/>
            <person name="Muse G.W."/>
            <person name="Burkholder A."/>
            <person name="Fargo D.C."/>
            <person name="Hu G."/>
            <person name="Adelman K."/>
        </authorList>
    </citation>
    <scope>FUNCTION</scope>
    <scope>DISRUPTION PHENOTYPE</scope>
</reference>
<reference key="11">
    <citation type="journal article" date="2015" name="PLoS ONE">
        <title>Translational initiation at a non-AUG start codon for human and mouse negative elongation factor-B.</title>
        <authorList>
            <person name="Pan H."/>
            <person name="Zhao X."/>
            <person name="Zhang X."/>
            <person name="Abouelsoud M."/>
            <person name="Sun J."/>
            <person name="April C."/>
            <person name="Amleh A."/>
            <person name="Fan J.B."/>
            <person name="Hu Y."/>
            <person name="Li R."/>
        </authorList>
    </citation>
    <scope>ALTERNATIVE INITIATION (ISOFORM 2)</scope>
    <scope>CTG START CODON (ISOFORM 2)</scope>
    <scope>INTERACTION WITH NELFA; NELFCD AND NELFE</scope>
    <scope>TISSUE SPECIFICITY</scope>
</reference>
<comment type="function">
    <text evidence="1 3 4 5">Essential component of the NELF complex, a complex that negatively regulates the elongation of transcription by RNA polymerase II (Pol II) (PubMed:25773599). The NELF complex, which acts via an association with the DSIF complex and causes transcriptional pausing, is counteracted by the P-TEFb kinase complex (By similarity). May be able to induce chromatin unfolding (By similarity). Essential for early embryogenesis; plays an important role in maintaining the undifferentiated state of embryonic stem cells (ESCs) by preventing unscheduled expression of developmental genes (PubMed:19340312). Plays a key role in establishing the responsiveness of stem cells to developmental cues; facilitates plasticity and cell fate commitment in ESCs by establishing the appropriate expression level of signaling molecules (PubMed:25773599). Supports the transcription of genes involved in energy metabolism in cardiomyocytes; facilitates the association of transcription initiation factors with the promoters of the metabolism-related genes (PubMed:24656816).</text>
</comment>
<comment type="subunit">
    <text evidence="1 6">The NELF complex is composed of NELFA, NELFB, NELFCD and NELFE; the N-terminus of NELFB binds to the NELFA:NELFCD subcomplex (By similarity). Binds RNA which may help to stabilize the NELF complex on nucleic acid (By similarity) Interacts with the first BRCT repeat of BRCA1 (By similarity). Interacts with KIAA1191 (By similarity). Isoform 1 and isoform 2 interact with NELFA, NELFCD and NELFE (PubMed:26010750).</text>
</comment>
<comment type="subcellular location">
    <subcellularLocation>
        <location evidence="1">Nucleus</location>
    </subcellularLocation>
</comment>
<comment type="alternative products">
    <event type="alternative initiation"/>
    <isoform>
        <id>Q8C4Y3-1</id>
        <name>1</name>
        <sequence type="displayed"/>
    </isoform>
    <isoform>
        <id>Q8C4Y3-3</id>
        <name>2</name>
        <sequence type="described" ref="VSP_059999"/>
    </isoform>
</comment>
<comment type="tissue specificity">
    <text evidence="6">Isoform 1 is expressed in the kidney, liver, adipose and lung (PubMed:26010750). Isoform 2 is widely expressed (PubMed:26010750).</text>
</comment>
<comment type="disruption phenotype">
    <text evidence="3 4 5">Mice exhibit early embryonic lethality (PubMed:19340312, PubMed:25773599). Knockdown in embryonic stem cells (ESCs) leads to proliferation defects, increased differentiation, increased expression of development-associated genes and the dysregulation of genes involved in signaling and metabolic pathways (PubMed:19340312, PubMed:25773599). Mice exhibit cardiomyopathy, impaired response to cardiac stress and the reduced expression of metabolism-related genes in cardiomyocytes (PubMed:24656816).</text>
</comment>
<comment type="miscellaneous">
    <molecule>Isoform 2</molecule>
    <text evidence="6">Produced by alternative initiation at a CTG start codon.</text>
</comment>
<comment type="similarity">
    <text evidence="8">Belongs to the NELF-B family.</text>
</comment>
<comment type="sequence caution" evidence="8">
    <conflict type="erroneous initiation">
        <sequence resource="EMBL-CDS" id="AAH04762"/>
    </conflict>
    <text>Truncated N-terminus.</text>
</comment>
<comment type="sequence caution" evidence="8">
    <conflict type="frameshift">
        <sequence resource="EMBL" id="AK080419"/>
    </conflict>
</comment>
<comment type="sequence caution" evidence="8">
    <conflict type="erroneous initiation">
        <sequence resource="EMBL-CDS" id="BAA95090"/>
    </conflict>
    <text>Truncated N-terminus.</text>
</comment>
<accession>Q8C4Y3</accession>
<accession>A0A0X1KG62</accession>
<accession>Q69ZP4</accession>
<accession>Q99J41</accession>
<accession>Q9JJA5</accession>
<evidence type="ECO:0000250" key="1">
    <source>
        <dbReference type="UniProtKB" id="Q8WX92"/>
    </source>
</evidence>
<evidence type="ECO:0000256" key="2">
    <source>
        <dbReference type="SAM" id="MobiDB-lite"/>
    </source>
</evidence>
<evidence type="ECO:0000269" key="3">
    <source>
    </source>
</evidence>
<evidence type="ECO:0000269" key="4">
    <source>
    </source>
</evidence>
<evidence type="ECO:0000269" key="5">
    <source>
    </source>
</evidence>
<evidence type="ECO:0000269" key="6">
    <source>
    </source>
</evidence>
<evidence type="ECO:0000303" key="7">
    <source>
    </source>
</evidence>
<evidence type="ECO:0000305" key="8"/>
<proteinExistence type="evidence at protein level"/>
<feature type="chain" id="PRO_0000219130" description="Negative elongation factor B">
    <location>
        <begin position="1"/>
        <end position="580"/>
    </location>
</feature>
<feature type="region of interest" description="Disordered" evidence="2">
    <location>
        <begin position="552"/>
        <end position="580"/>
    </location>
</feature>
<feature type="modified residue" description="N6-acetyllysine" evidence="1">
    <location>
        <position position="519"/>
    </location>
</feature>
<feature type="modified residue" description="Phosphoserine" evidence="1">
    <location>
        <position position="557"/>
    </location>
</feature>
<feature type="splice variant" id="VSP_059999" description="In isoform 2." evidence="8">
    <original>M</original>
    <variation>MATLEAAGERGLGGPRGTVERASGAPSGSATAPAERGGDGVHSRASAGASAM</variation>
    <location>
        <position position="1"/>
    </location>
</feature>
<feature type="sequence conflict" description="In Ref. 4; BAA95090." evidence="8" ref="4">
    <original>V</original>
    <variation>A</variation>
    <location>
        <position position="470"/>
    </location>
</feature>
<feature type="sequence conflict" description="In Ref. 4; BAA95090." evidence="8" ref="4">
    <original>K</original>
    <variation>R</variation>
    <location>
        <position position="547"/>
    </location>
</feature>
<sequence>MFAGLQDLGVANGEDLKETLTNCTEPLKAIEQFQTENGVLLPSLQSALPFLDLHGTPRLEFHQSVFDELRDKLLERVSAIASEGKAEERYKKLEDLLEKSFSLVKMPSLQPVVMCVMKHLPKVPEKKLKLVMADKELYRACAVEVKRQIWQDNQALFGDEVSPLLKQYILEKESALFSTELSVLHNFFSPSPKTRRQGEVVQKLTQMVGKNVKLYDMVLQFLRTLFLRTRNVHYCTLRAELLMSLHDLDVSDICTVDPCHKFTWCLDACIRERFVDSKRARELQGFLDGVKKGQEQVLGDLSMILCDPFAINTLSLSTIRHLQELVSQETLPRDSPDLLLLLRLLALGQGAWDLIDSQVFKEPKMEAELITKFLPMLMSLVVDDFTFNVDQKLPAEEKASVTYPNTLPESFTKFLQEQRMACEVGLYYVLHITKQRNKNALLRLLPGLVETFGDLAFSDIFLHLLTGSLVLLADEFALEDFCSSLFDGFFLTASPRKENVHRHVLRLLLHLHARVAPSKLEALQKALEPTGQSGEAVKELYSQLGEKLEQLDHRKPSPTQAAETPALDLPLPSVPAPATL</sequence>
<organism>
    <name type="scientific">Mus musculus</name>
    <name type="common">Mouse</name>
    <dbReference type="NCBI Taxonomy" id="10090"/>
    <lineage>
        <taxon>Eukaryota</taxon>
        <taxon>Metazoa</taxon>
        <taxon>Chordata</taxon>
        <taxon>Craniata</taxon>
        <taxon>Vertebrata</taxon>
        <taxon>Euteleostomi</taxon>
        <taxon>Mammalia</taxon>
        <taxon>Eutheria</taxon>
        <taxon>Euarchontoglires</taxon>
        <taxon>Glires</taxon>
        <taxon>Rodentia</taxon>
        <taxon>Myomorpha</taxon>
        <taxon>Muroidea</taxon>
        <taxon>Muridae</taxon>
        <taxon>Murinae</taxon>
        <taxon>Mus</taxon>
        <taxon>Mus</taxon>
    </lineage>
</organism>
<keyword id="KW-0007">Acetylation</keyword>
<keyword id="KW-0024">Alternative initiation</keyword>
<keyword id="KW-0539">Nucleus</keyword>
<keyword id="KW-0597">Phosphoprotein</keyword>
<keyword id="KW-1185">Reference proteome</keyword>
<keyword id="KW-0678">Repressor</keyword>
<keyword id="KW-0694">RNA-binding</keyword>
<keyword id="KW-0804">Transcription</keyword>
<keyword id="KW-0805">Transcription regulation</keyword>